<keyword id="KW-0030">Aminoacyl-tRNA synthetase</keyword>
<keyword id="KW-0067">ATP-binding</keyword>
<keyword id="KW-0963">Cytoplasm</keyword>
<keyword id="KW-0436">Ligase</keyword>
<keyword id="KW-0460">Magnesium</keyword>
<keyword id="KW-0479">Metal-binding</keyword>
<keyword id="KW-0547">Nucleotide-binding</keyword>
<keyword id="KW-0648">Protein biosynthesis</keyword>
<reference key="1">
    <citation type="journal article" date="2009" name="Proc. Natl. Acad. Sci. U.S.A.">
        <title>Biogeography of the Sulfolobus islandicus pan-genome.</title>
        <authorList>
            <person name="Reno M.L."/>
            <person name="Held N.L."/>
            <person name="Fields C.J."/>
            <person name="Burke P.V."/>
            <person name="Whitaker R.J."/>
        </authorList>
    </citation>
    <scope>NUCLEOTIDE SEQUENCE [LARGE SCALE GENOMIC DNA]</scope>
    <source>
        <strain>M.14.25 / Kamchatka #1</strain>
    </source>
</reference>
<evidence type="ECO:0000255" key="1">
    <source>
        <dbReference type="HAMAP-Rule" id="MF_00284"/>
    </source>
</evidence>
<name>SYFB_SACI4</name>
<sequence>MVTIVLNKYKLLDKIHIGQQKLEDLLFNLKSEVKPIDENNIEIEINADRLDLLSSDGIARAIKGLLEKELGEAKYNVTDTEYTLIVDNVRTRPYALAAVVYNAKIDLEELIQFQEKLHGTIGRKRKKVAIGIHDLRKVDSKTIEYKEVPLSYKFVPLYENKELTISEILEKTEQGKLYGNISIANGVSPAIVQDDGEVLSIPPIINSNKTRLDENTKDFFIDVTGTSFEAVAQTLDIIVSNLAEAGGTIGRVKVLKSANFSQLSSPLFLHKIQNVREEYVKKILGIKTSKEEICKHVMRMRMNCDIENGVIRVTVPQYRVDILNEIDVVEDIAMSIGYNNLEPSKYISTNYGSYDYMTLLERKIRELGIGAGYVEISNFVLIKDEKLFSNKYVKILNPVTDEYNAVRNSLIPGLLDFLSKNQHAKFPIRVFETGDVVVYDSSTDTGFRNDKRAAYAIMDNKVSYEDIQAPIHYILKSLGLEVNYKEENNNIFIEGRSASIFYENEKMGVIGEVNPDVLIRFGIEYPAVIAELYISEIAKRLTNQR</sequence>
<comment type="catalytic activity">
    <reaction evidence="1">
        <text>tRNA(Phe) + L-phenylalanine + ATP = L-phenylalanyl-tRNA(Phe) + AMP + diphosphate + H(+)</text>
        <dbReference type="Rhea" id="RHEA:19413"/>
        <dbReference type="Rhea" id="RHEA-COMP:9668"/>
        <dbReference type="Rhea" id="RHEA-COMP:9699"/>
        <dbReference type="ChEBI" id="CHEBI:15378"/>
        <dbReference type="ChEBI" id="CHEBI:30616"/>
        <dbReference type="ChEBI" id="CHEBI:33019"/>
        <dbReference type="ChEBI" id="CHEBI:58095"/>
        <dbReference type="ChEBI" id="CHEBI:78442"/>
        <dbReference type="ChEBI" id="CHEBI:78531"/>
        <dbReference type="ChEBI" id="CHEBI:456215"/>
        <dbReference type="EC" id="6.1.1.20"/>
    </reaction>
</comment>
<comment type="cofactor">
    <cofactor evidence="1">
        <name>Mg(2+)</name>
        <dbReference type="ChEBI" id="CHEBI:18420"/>
    </cofactor>
</comment>
<comment type="subunit">
    <text evidence="1">Tetramer of two alpha and two beta subunits.</text>
</comment>
<comment type="subcellular location">
    <subcellularLocation>
        <location evidence="1">Cytoplasm</location>
    </subcellularLocation>
</comment>
<comment type="similarity">
    <text evidence="1">Belongs to the phenylalanyl-tRNA synthetase beta subunit family. Type 2 subfamily.</text>
</comment>
<organism>
    <name type="scientific">Saccharolobus islandicus (strain M.14.25 / Kamchatka #1)</name>
    <name type="common">Sulfolobus islandicus</name>
    <dbReference type="NCBI Taxonomy" id="427317"/>
    <lineage>
        <taxon>Archaea</taxon>
        <taxon>Thermoproteota</taxon>
        <taxon>Thermoprotei</taxon>
        <taxon>Sulfolobales</taxon>
        <taxon>Sulfolobaceae</taxon>
        <taxon>Saccharolobus</taxon>
    </lineage>
</organism>
<feature type="chain" id="PRO_1000204845" description="Phenylalanine--tRNA ligase beta subunit">
    <location>
        <begin position="1"/>
        <end position="545"/>
    </location>
</feature>
<feature type="domain" description="B5" evidence="1">
    <location>
        <begin position="268"/>
        <end position="343"/>
    </location>
</feature>
<feature type="binding site" evidence="1">
    <location>
        <position position="321"/>
    </location>
    <ligand>
        <name>Mg(2+)</name>
        <dbReference type="ChEBI" id="CHEBI:18420"/>
        <note>shared with alpha subunit</note>
    </ligand>
</feature>
<feature type="binding site" evidence="1">
    <location>
        <position position="327"/>
    </location>
    <ligand>
        <name>Mg(2+)</name>
        <dbReference type="ChEBI" id="CHEBI:18420"/>
        <note>shared with alpha subunit</note>
    </ligand>
</feature>
<feature type="binding site" evidence="1">
    <location>
        <position position="330"/>
    </location>
    <ligand>
        <name>Mg(2+)</name>
        <dbReference type="ChEBI" id="CHEBI:18420"/>
        <note>shared with alpha subunit</note>
    </ligand>
</feature>
<feature type="binding site" evidence="1">
    <location>
        <position position="331"/>
    </location>
    <ligand>
        <name>Mg(2+)</name>
        <dbReference type="ChEBI" id="CHEBI:18420"/>
        <note>shared with alpha subunit</note>
    </ligand>
</feature>
<accession>C3MYY0</accession>
<dbReference type="EC" id="6.1.1.20" evidence="1"/>
<dbReference type="EMBL" id="CP001400">
    <property type="protein sequence ID" value="ACP38764.1"/>
    <property type="molecule type" value="Genomic_DNA"/>
</dbReference>
<dbReference type="RefSeq" id="WP_012711990.1">
    <property type="nucleotide sequence ID" value="NC_012588.1"/>
</dbReference>
<dbReference type="SMR" id="C3MYY0"/>
<dbReference type="GeneID" id="84062334"/>
<dbReference type="KEGG" id="sia:M1425_2023"/>
<dbReference type="HOGENOM" id="CLU_020279_3_0_2"/>
<dbReference type="Proteomes" id="UP000001350">
    <property type="component" value="Chromosome"/>
</dbReference>
<dbReference type="GO" id="GO:0009328">
    <property type="term" value="C:phenylalanine-tRNA ligase complex"/>
    <property type="evidence" value="ECO:0007669"/>
    <property type="project" value="TreeGrafter"/>
</dbReference>
<dbReference type="GO" id="GO:0005524">
    <property type="term" value="F:ATP binding"/>
    <property type="evidence" value="ECO:0007669"/>
    <property type="project" value="UniProtKB-UniRule"/>
</dbReference>
<dbReference type="GO" id="GO:0000287">
    <property type="term" value="F:magnesium ion binding"/>
    <property type="evidence" value="ECO:0007669"/>
    <property type="project" value="InterPro"/>
</dbReference>
<dbReference type="GO" id="GO:0004826">
    <property type="term" value="F:phenylalanine-tRNA ligase activity"/>
    <property type="evidence" value="ECO:0007669"/>
    <property type="project" value="UniProtKB-UniRule"/>
</dbReference>
<dbReference type="GO" id="GO:0003723">
    <property type="term" value="F:RNA binding"/>
    <property type="evidence" value="ECO:0007669"/>
    <property type="project" value="InterPro"/>
</dbReference>
<dbReference type="GO" id="GO:0006432">
    <property type="term" value="P:phenylalanyl-tRNA aminoacylation"/>
    <property type="evidence" value="ECO:0007669"/>
    <property type="project" value="UniProtKB-UniRule"/>
</dbReference>
<dbReference type="CDD" id="cd00769">
    <property type="entry name" value="PheRS_beta_core"/>
    <property type="match status" value="1"/>
</dbReference>
<dbReference type="FunFam" id="3.30.56.10:FF:000014">
    <property type="entry name" value="Phenylalanine--tRNA ligase beta subunit"/>
    <property type="match status" value="1"/>
</dbReference>
<dbReference type="Gene3D" id="3.30.56.10">
    <property type="match status" value="2"/>
</dbReference>
<dbReference type="Gene3D" id="3.30.930.10">
    <property type="entry name" value="Bira Bifunctional Protein, Domain 2"/>
    <property type="match status" value="1"/>
</dbReference>
<dbReference type="Gene3D" id="3.50.40.10">
    <property type="entry name" value="Phenylalanyl-trna Synthetase, Chain B, domain 3"/>
    <property type="match status" value="1"/>
</dbReference>
<dbReference type="HAMAP" id="MF_00284">
    <property type="entry name" value="Phe_tRNA_synth_beta2"/>
    <property type="match status" value="1"/>
</dbReference>
<dbReference type="InterPro" id="IPR045864">
    <property type="entry name" value="aa-tRNA-synth_II/BPL/LPL"/>
</dbReference>
<dbReference type="InterPro" id="IPR005146">
    <property type="entry name" value="B3/B4_tRNA-bd"/>
</dbReference>
<dbReference type="InterPro" id="IPR009061">
    <property type="entry name" value="DNA-bd_dom_put_sf"/>
</dbReference>
<dbReference type="InterPro" id="IPR045060">
    <property type="entry name" value="Phe-tRNA-ligase_IIc_bsu"/>
</dbReference>
<dbReference type="InterPro" id="IPR004531">
    <property type="entry name" value="Phe-tRNA-synth_IIc_bsu_arc_euk"/>
</dbReference>
<dbReference type="InterPro" id="IPR020825">
    <property type="entry name" value="Phe-tRNA_synthase-like_B3/B4"/>
</dbReference>
<dbReference type="InterPro" id="IPR022918">
    <property type="entry name" value="Phe_tRNA_ligase_beta2_arc"/>
</dbReference>
<dbReference type="InterPro" id="IPR041616">
    <property type="entry name" value="PheRS_beta_core"/>
</dbReference>
<dbReference type="InterPro" id="IPR005147">
    <property type="entry name" value="tRNA_synthase_B5-dom"/>
</dbReference>
<dbReference type="NCBIfam" id="TIGR00471">
    <property type="entry name" value="pheT_arch"/>
    <property type="match status" value="1"/>
</dbReference>
<dbReference type="PANTHER" id="PTHR10947:SF0">
    <property type="entry name" value="PHENYLALANINE--TRNA LIGASE BETA SUBUNIT"/>
    <property type="match status" value="1"/>
</dbReference>
<dbReference type="PANTHER" id="PTHR10947">
    <property type="entry name" value="PHENYLALANYL-TRNA SYNTHETASE BETA CHAIN AND LEUCINE-RICH REPEAT-CONTAINING PROTEIN 47"/>
    <property type="match status" value="1"/>
</dbReference>
<dbReference type="Pfam" id="PF03484">
    <property type="entry name" value="B5"/>
    <property type="match status" value="1"/>
</dbReference>
<dbReference type="Pfam" id="PF17759">
    <property type="entry name" value="tRNA_synthFbeta"/>
    <property type="match status" value="1"/>
</dbReference>
<dbReference type="SMART" id="SM00873">
    <property type="entry name" value="B3_4"/>
    <property type="match status" value="1"/>
</dbReference>
<dbReference type="SMART" id="SM00874">
    <property type="entry name" value="B5"/>
    <property type="match status" value="1"/>
</dbReference>
<dbReference type="SUPFAM" id="SSF55681">
    <property type="entry name" value="Class II aaRS and biotin synthetases"/>
    <property type="match status" value="1"/>
</dbReference>
<dbReference type="SUPFAM" id="SSF46955">
    <property type="entry name" value="Putative DNA-binding domain"/>
    <property type="match status" value="2"/>
</dbReference>
<dbReference type="PROSITE" id="PS51483">
    <property type="entry name" value="B5"/>
    <property type="match status" value="1"/>
</dbReference>
<protein>
    <recommendedName>
        <fullName evidence="1">Phenylalanine--tRNA ligase beta subunit</fullName>
        <ecNumber evidence="1">6.1.1.20</ecNumber>
    </recommendedName>
    <alternativeName>
        <fullName evidence="1">Phenylalanyl-tRNA synthetase beta subunit</fullName>
        <shortName evidence="1">PheRS</shortName>
    </alternativeName>
</protein>
<proteinExistence type="inferred from homology"/>
<gene>
    <name evidence="1" type="primary">pheT</name>
    <name type="ordered locus">M1425_2023</name>
</gene>